<accession>C3LQH9</accession>
<comment type="similarity">
    <text evidence="3">Belongs to the UPF0758 family.</text>
</comment>
<gene>
    <name type="ordered locus">VCM66_0205</name>
</gene>
<name>Y205_VIBCM</name>
<feature type="chain" id="PRO_1000195314" description="UPF0758 protein VCM66_0205">
    <location>
        <begin position="1"/>
        <end position="224"/>
    </location>
</feature>
<feature type="domain" description="MPN" evidence="1">
    <location>
        <begin position="102"/>
        <end position="224"/>
    </location>
</feature>
<feature type="region of interest" description="Disordered" evidence="2">
    <location>
        <begin position="1"/>
        <end position="20"/>
    </location>
</feature>
<feature type="short sequence motif" description="JAMM motif" evidence="1">
    <location>
        <begin position="173"/>
        <end position="186"/>
    </location>
</feature>
<feature type="binding site" evidence="1">
    <location>
        <position position="173"/>
    </location>
    <ligand>
        <name>Zn(2+)</name>
        <dbReference type="ChEBI" id="CHEBI:29105"/>
        <note>catalytic</note>
    </ligand>
</feature>
<feature type="binding site" evidence="1">
    <location>
        <position position="175"/>
    </location>
    <ligand>
        <name>Zn(2+)</name>
        <dbReference type="ChEBI" id="CHEBI:29105"/>
        <note>catalytic</note>
    </ligand>
</feature>
<feature type="binding site" evidence="1">
    <location>
        <position position="186"/>
    </location>
    <ligand>
        <name>Zn(2+)</name>
        <dbReference type="ChEBI" id="CHEBI:29105"/>
        <note>catalytic</note>
    </ligand>
</feature>
<proteinExistence type="inferred from homology"/>
<evidence type="ECO:0000255" key="1">
    <source>
        <dbReference type="PROSITE-ProRule" id="PRU01182"/>
    </source>
</evidence>
<evidence type="ECO:0000256" key="2">
    <source>
        <dbReference type="SAM" id="MobiDB-lite"/>
    </source>
</evidence>
<evidence type="ECO:0000305" key="3"/>
<organism>
    <name type="scientific">Vibrio cholerae serotype O1 (strain M66-2)</name>
    <dbReference type="NCBI Taxonomy" id="579112"/>
    <lineage>
        <taxon>Bacteria</taxon>
        <taxon>Pseudomonadati</taxon>
        <taxon>Pseudomonadota</taxon>
        <taxon>Gammaproteobacteria</taxon>
        <taxon>Vibrionales</taxon>
        <taxon>Vibrionaceae</taxon>
        <taxon>Vibrio</taxon>
    </lineage>
</organism>
<dbReference type="EMBL" id="CP001233">
    <property type="protein sequence ID" value="ACP04537.1"/>
    <property type="molecule type" value="Genomic_DNA"/>
</dbReference>
<dbReference type="SMR" id="C3LQH9"/>
<dbReference type="KEGG" id="vcm:VCM66_0205"/>
<dbReference type="HOGENOM" id="CLU_073529_0_2_6"/>
<dbReference type="Proteomes" id="UP000001217">
    <property type="component" value="Chromosome I"/>
</dbReference>
<dbReference type="GO" id="GO:0046872">
    <property type="term" value="F:metal ion binding"/>
    <property type="evidence" value="ECO:0007669"/>
    <property type="project" value="UniProtKB-KW"/>
</dbReference>
<dbReference type="GO" id="GO:0008237">
    <property type="term" value="F:metallopeptidase activity"/>
    <property type="evidence" value="ECO:0007669"/>
    <property type="project" value="UniProtKB-KW"/>
</dbReference>
<dbReference type="GO" id="GO:0006508">
    <property type="term" value="P:proteolysis"/>
    <property type="evidence" value="ECO:0007669"/>
    <property type="project" value="UniProtKB-KW"/>
</dbReference>
<dbReference type="CDD" id="cd08071">
    <property type="entry name" value="MPN_DUF2466"/>
    <property type="match status" value="1"/>
</dbReference>
<dbReference type="FunFam" id="3.40.140.10:FF:000032">
    <property type="entry name" value="DNA repair protein RadC"/>
    <property type="match status" value="1"/>
</dbReference>
<dbReference type="Gene3D" id="1.10.150.20">
    <property type="entry name" value="5' to 3' exonuclease, C-terminal subdomain"/>
    <property type="match status" value="1"/>
</dbReference>
<dbReference type="Gene3D" id="3.40.140.10">
    <property type="entry name" value="Cytidine Deaminase, domain 2"/>
    <property type="match status" value="1"/>
</dbReference>
<dbReference type="InterPro" id="IPR037518">
    <property type="entry name" value="MPN"/>
</dbReference>
<dbReference type="InterPro" id="IPR025657">
    <property type="entry name" value="RadC_JAB"/>
</dbReference>
<dbReference type="InterPro" id="IPR010994">
    <property type="entry name" value="RuvA_2-like"/>
</dbReference>
<dbReference type="InterPro" id="IPR001405">
    <property type="entry name" value="UPF0758"/>
</dbReference>
<dbReference type="InterPro" id="IPR020891">
    <property type="entry name" value="UPF0758_CS"/>
</dbReference>
<dbReference type="InterPro" id="IPR046778">
    <property type="entry name" value="UPF0758_N"/>
</dbReference>
<dbReference type="NCBIfam" id="NF000642">
    <property type="entry name" value="PRK00024.1"/>
    <property type="match status" value="1"/>
</dbReference>
<dbReference type="NCBIfam" id="TIGR00608">
    <property type="entry name" value="radc"/>
    <property type="match status" value="1"/>
</dbReference>
<dbReference type="PANTHER" id="PTHR30471">
    <property type="entry name" value="DNA REPAIR PROTEIN RADC"/>
    <property type="match status" value="1"/>
</dbReference>
<dbReference type="PANTHER" id="PTHR30471:SF3">
    <property type="entry name" value="UPF0758 PROTEIN YEES-RELATED"/>
    <property type="match status" value="1"/>
</dbReference>
<dbReference type="Pfam" id="PF04002">
    <property type="entry name" value="RadC"/>
    <property type="match status" value="1"/>
</dbReference>
<dbReference type="Pfam" id="PF20582">
    <property type="entry name" value="UPF0758_N"/>
    <property type="match status" value="1"/>
</dbReference>
<dbReference type="SUPFAM" id="SSF102712">
    <property type="entry name" value="JAB1/MPN domain"/>
    <property type="match status" value="1"/>
</dbReference>
<dbReference type="SUPFAM" id="SSF47781">
    <property type="entry name" value="RuvA domain 2-like"/>
    <property type="match status" value="1"/>
</dbReference>
<dbReference type="PROSITE" id="PS50249">
    <property type="entry name" value="MPN"/>
    <property type="match status" value="1"/>
</dbReference>
<dbReference type="PROSITE" id="PS01302">
    <property type="entry name" value="UPF0758"/>
    <property type="match status" value="1"/>
</dbReference>
<sequence length="224" mass="25246">MSLKQLPTESMPREKLLQRGPQSLSDAELLAIFLRTGTQGMNVLALADLLLRDFGSLRALFCASKEQFCRHKGLGEAKFVQLQAVLEMTQRYLAETLKRGDALTSPQQTKLYLSSVLRDRQREAFYILFLDNQHRVIRDEILFEGTIDAASVYPREVVKRALHHNAAAVILAHNHPSGVAEPSQADRRITDRLRDALGLVEIRVLDHFVVGDGEVVSFAERGWI</sequence>
<reference key="1">
    <citation type="journal article" date="2008" name="PLoS ONE">
        <title>A recalibrated molecular clock and independent origins for the cholera pandemic clones.</title>
        <authorList>
            <person name="Feng L."/>
            <person name="Reeves P.R."/>
            <person name="Lan R."/>
            <person name="Ren Y."/>
            <person name="Gao C."/>
            <person name="Zhou Z."/>
            <person name="Ren Y."/>
            <person name="Cheng J."/>
            <person name="Wang W."/>
            <person name="Wang J."/>
            <person name="Qian W."/>
            <person name="Li D."/>
            <person name="Wang L."/>
        </authorList>
    </citation>
    <scope>NUCLEOTIDE SEQUENCE [LARGE SCALE GENOMIC DNA]</scope>
    <source>
        <strain>M66-2</strain>
    </source>
</reference>
<protein>
    <recommendedName>
        <fullName>UPF0758 protein VCM66_0205</fullName>
    </recommendedName>
</protein>
<keyword id="KW-0378">Hydrolase</keyword>
<keyword id="KW-0479">Metal-binding</keyword>
<keyword id="KW-0482">Metalloprotease</keyword>
<keyword id="KW-0645">Protease</keyword>
<keyword id="KW-0862">Zinc</keyword>